<accession>Q136H9</accession>
<proteinExistence type="inferred from homology"/>
<gene>
    <name evidence="1" type="primary">pcm</name>
    <name type="ordered locus">RPD_2782</name>
</gene>
<comment type="function">
    <text evidence="1">Catalyzes the methyl esterification of L-isoaspartyl residues in peptides and proteins that result from spontaneous decomposition of normal L-aspartyl and L-asparaginyl residues. It plays a role in the repair and/or degradation of damaged proteins.</text>
</comment>
<comment type="catalytic activity">
    <reaction evidence="1">
        <text>[protein]-L-isoaspartate + S-adenosyl-L-methionine = [protein]-L-isoaspartate alpha-methyl ester + S-adenosyl-L-homocysteine</text>
        <dbReference type="Rhea" id="RHEA:12705"/>
        <dbReference type="Rhea" id="RHEA-COMP:12143"/>
        <dbReference type="Rhea" id="RHEA-COMP:12144"/>
        <dbReference type="ChEBI" id="CHEBI:57856"/>
        <dbReference type="ChEBI" id="CHEBI:59789"/>
        <dbReference type="ChEBI" id="CHEBI:90596"/>
        <dbReference type="ChEBI" id="CHEBI:90598"/>
        <dbReference type="EC" id="2.1.1.77"/>
    </reaction>
</comment>
<comment type="subcellular location">
    <subcellularLocation>
        <location evidence="1">Cytoplasm</location>
    </subcellularLocation>
</comment>
<comment type="similarity">
    <text evidence="1">Belongs to the methyltransferase superfamily. L-isoaspartyl/D-aspartyl protein methyltransferase family.</text>
</comment>
<sequence>MVSSVAPPPEKMMFQLSLRRRGISDRAVLQAMEAVPRDRFVDPVHRDGAWRDTALPIACGQTISQPFVVAYMTEQLRLEAGHRLLEIGTGSGYHAAVLSRLVRDVVSVERFKTLADRARARLKELNYANVEVLLGDGFAIPEGAGTFDRIIVTAAMTELSQPLLDLLDPGGILIAPIGPANGRQTLIRVERKDDDFIRKALVDVRFVPALTGIAREL</sequence>
<feature type="chain" id="PRO_0000351925" description="Protein-L-isoaspartate O-methyltransferase">
    <location>
        <begin position="1"/>
        <end position="217"/>
    </location>
</feature>
<feature type="active site" evidence="1">
    <location>
        <position position="64"/>
    </location>
</feature>
<organism>
    <name type="scientific">Rhodopseudomonas palustris (strain BisB5)</name>
    <dbReference type="NCBI Taxonomy" id="316057"/>
    <lineage>
        <taxon>Bacteria</taxon>
        <taxon>Pseudomonadati</taxon>
        <taxon>Pseudomonadota</taxon>
        <taxon>Alphaproteobacteria</taxon>
        <taxon>Hyphomicrobiales</taxon>
        <taxon>Nitrobacteraceae</taxon>
        <taxon>Rhodopseudomonas</taxon>
    </lineage>
</organism>
<name>PIMT_RHOPS</name>
<reference key="1">
    <citation type="submission" date="2006-03" db="EMBL/GenBank/DDBJ databases">
        <title>Complete sequence of Rhodopseudomonas palustris BisB5.</title>
        <authorList>
            <consortium name="US DOE Joint Genome Institute"/>
            <person name="Copeland A."/>
            <person name="Lucas S."/>
            <person name="Lapidus A."/>
            <person name="Barry K."/>
            <person name="Detter J.C."/>
            <person name="Glavina del Rio T."/>
            <person name="Hammon N."/>
            <person name="Israni S."/>
            <person name="Dalin E."/>
            <person name="Tice H."/>
            <person name="Pitluck S."/>
            <person name="Chain P."/>
            <person name="Malfatti S."/>
            <person name="Shin M."/>
            <person name="Vergez L."/>
            <person name="Schmutz J."/>
            <person name="Larimer F."/>
            <person name="Land M."/>
            <person name="Hauser L."/>
            <person name="Pelletier D.A."/>
            <person name="Kyrpides N."/>
            <person name="Lykidis A."/>
            <person name="Oda Y."/>
            <person name="Harwood C.S."/>
            <person name="Richardson P."/>
        </authorList>
    </citation>
    <scope>NUCLEOTIDE SEQUENCE [LARGE SCALE GENOMIC DNA]</scope>
    <source>
        <strain>BisB5</strain>
    </source>
</reference>
<dbReference type="EC" id="2.1.1.77" evidence="1"/>
<dbReference type="EMBL" id="CP000283">
    <property type="protein sequence ID" value="ABE40010.1"/>
    <property type="molecule type" value="Genomic_DNA"/>
</dbReference>
<dbReference type="SMR" id="Q136H9"/>
<dbReference type="STRING" id="316057.RPD_2782"/>
<dbReference type="KEGG" id="rpd:RPD_2782"/>
<dbReference type="eggNOG" id="COG2518">
    <property type="taxonomic scope" value="Bacteria"/>
</dbReference>
<dbReference type="HOGENOM" id="CLU_055432_2_0_5"/>
<dbReference type="BioCyc" id="RPAL316057:RPD_RS13975-MONOMER"/>
<dbReference type="Proteomes" id="UP000001818">
    <property type="component" value="Chromosome"/>
</dbReference>
<dbReference type="GO" id="GO:0005737">
    <property type="term" value="C:cytoplasm"/>
    <property type="evidence" value="ECO:0007669"/>
    <property type="project" value="UniProtKB-SubCell"/>
</dbReference>
<dbReference type="GO" id="GO:0004719">
    <property type="term" value="F:protein-L-isoaspartate (D-aspartate) O-methyltransferase activity"/>
    <property type="evidence" value="ECO:0007669"/>
    <property type="project" value="UniProtKB-UniRule"/>
</dbReference>
<dbReference type="GO" id="GO:0032259">
    <property type="term" value="P:methylation"/>
    <property type="evidence" value="ECO:0007669"/>
    <property type="project" value="UniProtKB-KW"/>
</dbReference>
<dbReference type="GO" id="GO:0036211">
    <property type="term" value="P:protein modification process"/>
    <property type="evidence" value="ECO:0007669"/>
    <property type="project" value="UniProtKB-UniRule"/>
</dbReference>
<dbReference type="GO" id="GO:0030091">
    <property type="term" value="P:protein repair"/>
    <property type="evidence" value="ECO:0007669"/>
    <property type="project" value="UniProtKB-UniRule"/>
</dbReference>
<dbReference type="CDD" id="cd02440">
    <property type="entry name" value="AdoMet_MTases"/>
    <property type="match status" value="1"/>
</dbReference>
<dbReference type="FunFam" id="3.40.50.150:FF:000010">
    <property type="entry name" value="Protein-L-isoaspartate O-methyltransferase"/>
    <property type="match status" value="1"/>
</dbReference>
<dbReference type="Gene3D" id="3.40.50.150">
    <property type="entry name" value="Vaccinia Virus protein VP39"/>
    <property type="match status" value="1"/>
</dbReference>
<dbReference type="HAMAP" id="MF_00090">
    <property type="entry name" value="PIMT"/>
    <property type="match status" value="1"/>
</dbReference>
<dbReference type="InterPro" id="IPR000682">
    <property type="entry name" value="PCMT"/>
</dbReference>
<dbReference type="InterPro" id="IPR029063">
    <property type="entry name" value="SAM-dependent_MTases_sf"/>
</dbReference>
<dbReference type="NCBIfam" id="TIGR00080">
    <property type="entry name" value="pimt"/>
    <property type="match status" value="1"/>
</dbReference>
<dbReference type="NCBIfam" id="NF001453">
    <property type="entry name" value="PRK00312.1"/>
    <property type="match status" value="1"/>
</dbReference>
<dbReference type="PANTHER" id="PTHR11579">
    <property type="entry name" value="PROTEIN-L-ISOASPARTATE O-METHYLTRANSFERASE"/>
    <property type="match status" value="1"/>
</dbReference>
<dbReference type="PANTHER" id="PTHR11579:SF0">
    <property type="entry name" value="PROTEIN-L-ISOASPARTATE(D-ASPARTATE) O-METHYLTRANSFERASE"/>
    <property type="match status" value="1"/>
</dbReference>
<dbReference type="Pfam" id="PF01135">
    <property type="entry name" value="PCMT"/>
    <property type="match status" value="1"/>
</dbReference>
<dbReference type="SUPFAM" id="SSF53335">
    <property type="entry name" value="S-adenosyl-L-methionine-dependent methyltransferases"/>
    <property type="match status" value="1"/>
</dbReference>
<keyword id="KW-0963">Cytoplasm</keyword>
<keyword id="KW-0489">Methyltransferase</keyword>
<keyword id="KW-0949">S-adenosyl-L-methionine</keyword>
<keyword id="KW-0808">Transferase</keyword>
<protein>
    <recommendedName>
        <fullName evidence="1">Protein-L-isoaspartate O-methyltransferase</fullName>
        <ecNumber evidence="1">2.1.1.77</ecNumber>
    </recommendedName>
    <alternativeName>
        <fullName evidence="1">L-isoaspartyl protein carboxyl methyltransferase</fullName>
    </alternativeName>
    <alternativeName>
        <fullName evidence="1">Protein L-isoaspartyl methyltransferase</fullName>
    </alternativeName>
    <alternativeName>
        <fullName evidence="1">Protein-beta-aspartate methyltransferase</fullName>
        <shortName evidence="1">PIMT</shortName>
    </alternativeName>
</protein>
<evidence type="ECO:0000255" key="1">
    <source>
        <dbReference type="HAMAP-Rule" id="MF_00090"/>
    </source>
</evidence>